<protein>
    <recommendedName>
        <fullName>dTDP-L-rhamnose 4-epimerase</fullName>
        <ecNumber>5.1.3.25</ecNumber>
    </recommendedName>
</protein>
<reference key="1">
    <citation type="journal article" date="2005" name="BMC Genomics">
        <title>Bacterial genome adaptation to niches: divergence of the potential virulence genes in three Burkholderia species of different survival strategies.</title>
        <authorList>
            <person name="Kim H.S."/>
            <person name="Schell M.A."/>
            <person name="Yu Y."/>
            <person name="Ulrich R.L."/>
            <person name="Sarria S.H."/>
            <person name="Nierman W.C."/>
            <person name="DeShazer D."/>
        </authorList>
    </citation>
    <scope>NUCLEOTIDE SEQUENCE [LARGE SCALE GENOMIC DNA]</scope>
    <source>
        <strain>ATCC 700388 / DSM 13276 / CCUG 48851 / CIP 106301 / E264</strain>
    </source>
</reference>
<reference key="2">
    <citation type="journal article" date="2011" name="Bioorg. Med. Chem. Lett.">
        <title>A new route to dTDP-6-deoxy-l-talose and dTDP-L-rhamnose: dTDP-L-rhamnose 4-epimerase in Burkholderia thailandensis.</title>
        <authorList>
            <person name="Yoo H.G."/>
            <person name="Kwon S.Y."/>
            <person name="Karki S."/>
            <person name="Kwon H.J."/>
        </authorList>
    </citation>
    <scope>FUNCTION</scope>
    <scope>CATALYTIC ACTIVITY</scope>
    <scope>BIOPHYSICOCHEMICAL PROPERTIES</scope>
    <scope>PATHWAY</scope>
    <source>
        <strain>ATCC 700388 / DSM 13276 / CCUG 48851 / CIP 106301 / E264</strain>
    </source>
</reference>
<keyword id="KW-0413">Isomerase</keyword>
<keyword id="KW-0448">Lipopolysaccharide biosynthesis</keyword>
<keyword id="KW-0520">NAD</keyword>
<proteinExistence type="evidence at protein level"/>
<comment type="function">
    <text evidence="2">Catalyzes the interconvertion of dTDP-6-deoxy-L-talose and dTDP-L-rhamnose. The equilibrium is strongly toward dTDP-L-rhamnose.</text>
</comment>
<comment type="catalytic activity">
    <reaction evidence="2">
        <text>dTDP-6-deoxy-beta-L-talose = dTDP-beta-L-rhamnose</text>
        <dbReference type="Rhea" id="RHEA:34451"/>
        <dbReference type="ChEBI" id="CHEBI:57510"/>
        <dbReference type="ChEBI" id="CHEBI:68576"/>
        <dbReference type="EC" id="5.1.3.25"/>
    </reaction>
</comment>
<comment type="cofactor">
    <cofactor evidence="1">
        <name>NAD(+)</name>
        <dbReference type="ChEBI" id="CHEBI:57540"/>
    </cofactor>
</comment>
<comment type="biophysicochemical properties">
    <kinetics>
        <KM evidence="2">24.7 uM for dTDP-6-deoxy-L-talose</KM>
        <text>kcat is 0.9 sec(-1) for dTDP-6-deoxy-L-talose.</text>
    </kinetics>
    <phDependence>
        <text evidence="2">Optimum pH is 7.8-8.4.</text>
    </phDependence>
</comment>
<comment type="pathway">
    <text evidence="2">Bacterial outer membrane biogenesis; LPS O-antigen biosynthesis.</text>
</comment>
<comment type="similarity">
    <text evidence="3">Belongs to the NAD(P)-dependent epimerase/dehydratase family.</text>
</comment>
<evidence type="ECO:0000250" key="1"/>
<evidence type="ECO:0000269" key="2">
    <source>
    </source>
</evidence>
<evidence type="ECO:0000305" key="3"/>
<name>WBIB_BURTA</name>
<feature type="chain" id="PRO_0000424103" description="dTDP-L-rhamnose 4-epimerase">
    <location>
        <begin position="1"/>
        <end position="363"/>
    </location>
</feature>
<feature type="active site" description="Proton acceptor" evidence="1">
    <location>
        <position position="191"/>
    </location>
</feature>
<feature type="binding site" evidence="1">
    <location>
        <begin position="18"/>
        <end position="24"/>
    </location>
    <ligand>
        <name>NAD(+)</name>
        <dbReference type="ChEBI" id="CHEBI:57540"/>
    </ligand>
</feature>
<feature type="binding site" evidence="1">
    <location>
        <begin position="68"/>
        <end position="69"/>
    </location>
    <ligand>
        <name>NAD(+)</name>
        <dbReference type="ChEBI" id="CHEBI:57540"/>
    </ligand>
</feature>
<feature type="binding site" evidence="1">
    <location>
        <begin position="90"/>
        <end position="94"/>
    </location>
    <ligand>
        <name>NAD(+)</name>
        <dbReference type="ChEBI" id="CHEBI:57540"/>
    </ligand>
</feature>
<feature type="binding site" evidence="1">
    <location>
        <position position="136"/>
    </location>
    <ligand>
        <name>substrate</name>
    </ligand>
</feature>
<feature type="binding site" evidence="1">
    <location>
        <position position="191"/>
    </location>
    <ligand>
        <name>NAD(+)</name>
        <dbReference type="ChEBI" id="CHEBI:57540"/>
    </ligand>
</feature>
<feature type="binding site" evidence="1">
    <location>
        <position position="191"/>
    </location>
    <ligand>
        <name>substrate</name>
    </ligand>
</feature>
<feature type="binding site" evidence="1">
    <location>
        <position position="195"/>
    </location>
    <ligand>
        <name>NAD(+)</name>
        <dbReference type="ChEBI" id="CHEBI:57540"/>
    </ligand>
</feature>
<feature type="binding site" evidence="1">
    <location>
        <position position="220"/>
    </location>
    <ligand>
        <name>substrate</name>
    </ligand>
</feature>
<feature type="binding site" evidence="1">
    <location>
        <position position="259"/>
    </location>
    <ligand>
        <name>substrate</name>
    </ligand>
</feature>
<sequence length="363" mass="39159">MSDVNASLVDGKKILVTGGAGFIGCAISERLAARASRYVVMDNLHPQIHANAVRPVALHEKAELVVADVTDAGAWDALLSDFQPEIIIHLAAETGTGQSLTEASRHALVNVVGTTRLTDAIVKHGIAVEHILLTSSRAVYGEGAWQKADGTIVYPGQRGRAQLEAAQWDFPGMTMLPSRADRTEPRPTSVYGATKLAQEHVLRAWSLATKTPLSILRLQNVYGPGQSLTNSYTGIVALFSRLAREKKVIPLYEDGNVTRDFVSIDDVADAIVATLAREPEALSLFDIGSGQATSILDMARIIAAHYGAPEPQVNGAFRDGDVRHAACDLSESLANLGWKPQWSLERGIGELQTWIAQELDRKN</sequence>
<accession>Q2SYH7</accession>
<organism>
    <name type="scientific">Burkholderia thailandensis (strain ATCC 700388 / DSM 13276 / CCUG 48851 / CIP 106301 / E264)</name>
    <dbReference type="NCBI Taxonomy" id="271848"/>
    <lineage>
        <taxon>Bacteria</taxon>
        <taxon>Pseudomonadati</taxon>
        <taxon>Pseudomonadota</taxon>
        <taxon>Betaproteobacteria</taxon>
        <taxon>Burkholderiales</taxon>
        <taxon>Burkholderiaceae</taxon>
        <taxon>Burkholderia</taxon>
        <taxon>pseudomallei group</taxon>
    </lineage>
</organism>
<gene>
    <name type="primary">wbiB</name>
    <name type="ordered locus">BTH_I1476</name>
</gene>
<dbReference type="EC" id="5.1.3.25"/>
<dbReference type="EMBL" id="CP000086">
    <property type="protein sequence ID" value="ABC37367.1"/>
    <property type="molecule type" value="Genomic_DNA"/>
</dbReference>
<dbReference type="RefSeq" id="WP_009889595.1">
    <property type="nucleotide sequence ID" value="NC_007651.1"/>
</dbReference>
<dbReference type="SMR" id="Q2SYH7"/>
<dbReference type="GeneID" id="45121217"/>
<dbReference type="KEGG" id="bte:BTH_I1476"/>
<dbReference type="HOGENOM" id="CLU_007383_1_7_4"/>
<dbReference type="BRENDA" id="5.1.3.25">
    <property type="organism ID" value="8156"/>
</dbReference>
<dbReference type="UniPathway" id="UPA00281"/>
<dbReference type="Proteomes" id="UP000001930">
    <property type="component" value="Chromosome I"/>
</dbReference>
<dbReference type="GO" id="GO:0016853">
    <property type="term" value="F:isomerase activity"/>
    <property type="evidence" value="ECO:0007669"/>
    <property type="project" value="UniProtKB-KW"/>
</dbReference>
<dbReference type="GO" id="GO:0009243">
    <property type="term" value="P:O antigen biosynthetic process"/>
    <property type="evidence" value="ECO:0007669"/>
    <property type="project" value="UniProtKB-UniPathway"/>
</dbReference>
<dbReference type="Gene3D" id="3.40.50.720">
    <property type="entry name" value="NAD(P)-binding Rossmann-like Domain"/>
    <property type="match status" value="1"/>
</dbReference>
<dbReference type="InterPro" id="IPR001509">
    <property type="entry name" value="Epimerase_deHydtase"/>
</dbReference>
<dbReference type="InterPro" id="IPR036291">
    <property type="entry name" value="NAD(P)-bd_dom_sf"/>
</dbReference>
<dbReference type="PANTHER" id="PTHR43000">
    <property type="entry name" value="DTDP-D-GLUCOSE 4,6-DEHYDRATASE-RELATED"/>
    <property type="match status" value="1"/>
</dbReference>
<dbReference type="Pfam" id="PF01370">
    <property type="entry name" value="Epimerase"/>
    <property type="match status" value="2"/>
</dbReference>
<dbReference type="PRINTS" id="PR01713">
    <property type="entry name" value="NUCEPIMERASE"/>
</dbReference>
<dbReference type="SUPFAM" id="SSF51735">
    <property type="entry name" value="NAD(P)-binding Rossmann-fold domains"/>
    <property type="match status" value="1"/>
</dbReference>